<feature type="chain" id="PRO_0000190729" description="UPF0758 protein SPO0054">
    <location>
        <begin position="1"/>
        <end position="224"/>
    </location>
</feature>
<feature type="domain" description="MPN" evidence="1">
    <location>
        <begin position="102"/>
        <end position="224"/>
    </location>
</feature>
<feature type="short sequence motif" description="JAMM motif" evidence="1">
    <location>
        <begin position="173"/>
        <end position="186"/>
    </location>
</feature>
<feature type="binding site" evidence="1">
    <location>
        <position position="173"/>
    </location>
    <ligand>
        <name>Zn(2+)</name>
        <dbReference type="ChEBI" id="CHEBI:29105"/>
        <note>catalytic</note>
    </ligand>
</feature>
<feature type="binding site" evidence="1">
    <location>
        <position position="175"/>
    </location>
    <ligand>
        <name>Zn(2+)</name>
        <dbReference type="ChEBI" id="CHEBI:29105"/>
        <note>catalytic</note>
    </ligand>
</feature>
<feature type="binding site" evidence="1">
    <location>
        <position position="186"/>
    </location>
    <ligand>
        <name>Zn(2+)</name>
        <dbReference type="ChEBI" id="CHEBI:29105"/>
        <note>catalytic</note>
    </ligand>
</feature>
<reference key="1">
    <citation type="journal article" date="2004" name="Nature">
        <title>Genome sequence of Silicibacter pomeroyi reveals adaptations to the marine environment.</title>
        <authorList>
            <person name="Moran M.A."/>
            <person name="Buchan A."/>
            <person name="Gonzalez J.M."/>
            <person name="Heidelberg J.F."/>
            <person name="Whitman W.B."/>
            <person name="Kiene R.P."/>
            <person name="Henriksen J.R."/>
            <person name="King G.M."/>
            <person name="Belas R."/>
            <person name="Fuqua C."/>
            <person name="Brinkac L.M."/>
            <person name="Lewis M."/>
            <person name="Johri S."/>
            <person name="Weaver B."/>
            <person name="Pai G."/>
            <person name="Eisen J.A."/>
            <person name="Rahe E."/>
            <person name="Sheldon W.M."/>
            <person name="Ye W."/>
            <person name="Miller T.R."/>
            <person name="Carlton J."/>
            <person name="Rasko D.A."/>
            <person name="Paulsen I.T."/>
            <person name="Ren Q."/>
            <person name="Daugherty S.C."/>
            <person name="DeBoy R.T."/>
            <person name="Dodson R.J."/>
            <person name="Durkin A.S."/>
            <person name="Madupu R."/>
            <person name="Nelson W.C."/>
            <person name="Sullivan S.A."/>
            <person name="Rosovitz M.J."/>
            <person name="Haft D.H."/>
            <person name="Selengut J."/>
            <person name="Ward N."/>
        </authorList>
    </citation>
    <scope>NUCLEOTIDE SEQUENCE [LARGE SCALE GENOMIC DNA]</scope>
    <source>
        <strain>ATCC 700808 / DSM 15171 / DSS-3</strain>
    </source>
</reference>
<reference key="2">
    <citation type="journal article" date="2014" name="Stand. Genomic Sci.">
        <title>An updated genome annotation for the model marine bacterium Ruegeria pomeroyi DSS-3.</title>
        <authorList>
            <person name="Rivers A.R."/>
            <person name="Smith C.B."/>
            <person name="Moran M.A."/>
        </authorList>
    </citation>
    <scope>GENOME REANNOTATION</scope>
    <source>
        <strain>ATCC 700808 / DSM 15171 / DSS-3</strain>
    </source>
</reference>
<comment type="similarity">
    <text evidence="2">Belongs to the UPF0758 family.</text>
</comment>
<name>Y054_RUEPO</name>
<organism>
    <name type="scientific">Ruegeria pomeroyi (strain ATCC 700808 / DSM 15171 / DSS-3)</name>
    <name type="common">Silicibacter pomeroyi</name>
    <dbReference type="NCBI Taxonomy" id="246200"/>
    <lineage>
        <taxon>Bacteria</taxon>
        <taxon>Pseudomonadati</taxon>
        <taxon>Pseudomonadota</taxon>
        <taxon>Alphaproteobacteria</taxon>
        <taxon>Rhodobacterales</taxon>
        <taxon>Roseobacteraceae</taxon>
        <taxon>Ruegeria</taxon>
    </lineage>
</organism>
<evidence type="ECO:0000255" key="1">
    <source>
        <dbReference type="PROSITE-ProRule" id="PRU01182"/>
    </source>
</evidence>
<evidence type="ECO:0000305" key="2"/>
<keyword id="KW-0378">Hydrolase</keyword>
<keyword id="KW-0479">Metal-binding</keyword>
<keyword id="KW-0482">Metalloprotease</keyword>
<keyword id="KW-0645">Protease</keyword>
<keyword id="KW-1185">Reference proteome</keyword>
<keyword id="KW-0862">Zinc</keyword>
<dbReference type="EMBL" id="CP000031">
    <property type="protein sequence ID" value="AAV93385.1"/>
    <property type="molecule type" value="Genomic_DNA"/>
</dbReference>
<dbReference type="SMR" id="Q5LWK3"/>
<dbReference type="STRING" id="246200.SPO0054"/>
<dbReference type="PaxDb" id="246200-SPO0054"/>
<dbReference type="KEGG" id="sil:SPO0054"/>
<dbReference type="eggNOG" id="COG2003">
    <property type="taxonomic scope" value="Bacteria"/>
</dbReference>
<dbReference type="HOGENOM" id="CLU_073529_0_0_5"/>
<dbReference type="Proteomes" id="UP000001023">
    <property type="component" value="Chromosome"/>
</dbReference>
<dbReference type="GO" id="GO:0046872">
    <property type="term" value="F:metal ion binding"/>
    <property type="evidence" value="ECO:0007669"/>
    <property type="project" value="UniProtKB-KW"/>
</dbReference>
<dbReference type="GO" id="GO:0008237">
    <property type="term" value="F:metallopeptidase activity"/>
    <property type="evidence" value="ECO:0007669"/>
    <property type="project" value="UniProtKB-KW"/>
</dbReference>
<dbReference type="GO" id="GO:0006508">
    <property type="term" value="P:proteolysis"/>
    <property type="evidence" value="ECO:0007669"/>
    <property type="project" value="UniProtKB-KW"/>
</dbReference>
<dbReference type="CDD" id="cd08071">
    <property type="entry name" value="MPN_DUF2466"/>
    <property type="match status" value="1"/>
</dbReference>
<dbReference type="FunFam" id="3.40.140.10:FF:000100">
    <property type="entry name" value="DNA repair protein RadC"/>
    <property type="match status" value="1"/>
</dbReference>
<dbReference type="Gene3D" id="1.10.150.20">
    <property type="entry name" value="5' to 3' exonuclease, C-terminal subdomain"/>
    <property type="match status" value="1"/>
</dbReference>
<dbReference type="Gene3D" id="3.40.140.10">
    <property type="entry name" value="Cytidine Deaminase, domain 2"/>
    <property type="match status" value="1"/>
</dbReference>
<dbReference type="InterPro" id="IPR037518">
    <property type="entry name" value="MPN"/>
</dbReference>
<dbReference type="InterPro" id="IPR025657">
    <property type="entry name" value="RadC_JAB"/>
</dbReference>
<dbReference type="InterPro" id="IPR010994">
    <property type="entry name" value="RuvA_2-like"/>
</dbReference>
<dbReference type="InterPro" id="IPR001405">
    <property type="entry name" value="UPF0758"/>
</dbReference>
<dbReference type="InterPro" id="IPR020891">
    <property type="entry name" value="UPF0758_CS"/>
</dbReference>
<dbReference type="InterPro" id="IPR046778">
    <property type="entry name" value="UPF0758_N"/>
</dbReference>
<dbReference type="NCBIfam" id="NF000642">
    <property type="entry name" value="PRK00024.1"/>
    <property type="match status" value="1"/>
</dbReference>
<dbReference type="NCBIfam" id="TIGR00608">
    <property type="entry name" value="radc"/>
    <property type="match status" value="1"/>
</dbReference>
<dbReference type="PANTHER" id="PTHR30471">
    <property type="entry name" value="DNA REPAIR PROTEIN RADC"/>
    <property type="match status" value="1"/>
</dbReference>
<dbReference type="PANTHER" id="PTHR30471:SF3">
    <property type="entry name" value="UPF0758 PROTEIN YEES-RELATED"/>
    <property type="match status" value="1"/>
</dbReference>
<dbReference type="Pfam" id="PF04002">
    <property type="entry name" value="RadC"/>
    <property type="match status" value="1"/>
</dbReference>
<dbReference type="Pfam" id="PF20582">
    <property type="entry name" value="UPF0758_N"/>
    <property type="match status" value="1"/>
</dbReference>
<dbReference type="SUPFAM" id="SSF102712">
    <property type="entry name" value="JAB1/MPN domain"/>
    <property type="match status" value="1"/>
</dbReference>
<dbReference type="SUPFAM" id="SSF47781">
    <property type="entry name" value="RuvA domain 2-like"/>
    <property type="match status" value="1"/>
</dbReference>
<dbReference type="PROSITE" id="PS50249">
    <property type="entry name" value="MPN"/>
    <property type="match status" value="1"/>
</dbReference>
<dbReference type="PROSITE" id="PS01302">
    <property type="entry name" value="UPF0758"/>
    <property type="match status" value="1"/>
</dbReference>
<protein>
    <recommendedName>
        <fullName>UPF0758 protein SPO0054</fullName>
    </recommendedName>
</protein>
<accession>Q5LWK3</accession>
<proteinExistence type="inferred from homology"/>
<gene>
    <name type="ordered locus">SPO0054</name>
</gene>
<sequence length="224" mass="25380">MPSYIRDHRKRLRERFMTGGAAALPDYELLELVLFRSIPRQDVKPLARLLLDTFGDFNRVLTAPVERLAEVKGVGEAVITDLKILEASAHRMARARVMQRQVISSWDALLDYCHTTMAHRETEQFRVFYLDRKNVLIADEEQARGTVDHVPVYPREVAKRALELNASALILVHNHPSGDPTPSQSDIDMTARIRSACEALGLTLHDHLIIGKSVELSFRAEGYL</sequence>